<sequence length="91" mass="10238">MSRSLKKGPFVDHHLLAKVEKAVAIKDKKPVKTWSRRSTILPEFIGVTIAVHNGKQHVPVYVTDQMVGHKLGEFALTRTFKGHPADKKAKR</sequence>
<keyword id="KW-1185">Reference proteome</keyword>
<keyword id="KW-0687">Ribonucleoprotein</keyword>
<keyword id="KW-0689">Ribosomal protein</keyword>
<keyword id="KW-0694">RNA-binding</keyword>
<keyword id="KW-0699">rRNA-binding</keyword>
<accession>B1Y8I3</accession>
<protein>
    <recommendedName>
        <fullName evidence="1">Small ribosomal subunit protein uS19</fullName>
    </recommendedName>
    <alternativeName>
        <fullName evidence="2">30S ribosomal protein S19</fullName>
    </alternativeName>
</protein>
<organism>
    <name type="scientific">Leptothrix cholodnii (strain ATCC 51168 / LMG 8142 / SP-6)</name>
    <name type="common">Leptothrix discophora (strain SP-6)</name>
    <dbReference type="NCBI Taxonomy" id="395495"/>
    <lineage>
        <taxon>Bacteria</taxon>
        <taxon>Pseudomonadati</taxon>
        <taxon>Pseudomonadota</taxon>
        <taxon>Betaproteobacteria</taxon>
        <taxon>Burkholderiales</taxon>
        <taxon>Sphaerotilaceae</taxon>
        <taxon>Leptothrix</taxon>
    </lineage>
</organism>
<evidence type="ECO:0000255" key="1">
    <source>
        <dbReference type="HAMAP-Rule" id="MF_00531"/>
    </source>
</evidence>
<evidence type="ECO:0000305" key="2"/>
<gene>
    <name evidence="1" type="primary">rpsS</name>
    <name type="ordered locus">Lcho_3995</name>
</gene>
<comment type="function">
    <text evidence="1">Protein S19 forms a complex with S13 that binds strongly to the 16S ribosomal RNA.</text>
</comment>
<comment type="similarity">
    <text evidence="1">Belongs to the universal ribosomal protein uS19 family.</text>
</comment>
<feature type="chain" id="PRO_1000127997" description="Small ribosomal subunit protein uS19">
    <location>
        <begin position="1"/>
        <end position="91"/>
    </location>
</feature>
<reference key="1">
    <citation type="submission" date="2008-03" db="EMBL/GenBank/DDBJ databases">
        <title>Complete sequence of Leptothrix cholodnii SP-6.</title>
        <authorList>
            <consortium name="US DOE Joint Genome Institute"/>
            <person name="Copeland A."/>
            <person name="Lucas S."/>
            <person name="Lapidus A."/>
            <person name="Glavina del Rio T."/>
            <person name="Dalin E."/>
            <person name="Tice H."/>
            <person name="Bruce D."/>
            <person name="Goodwin L."/>
            <person name="Pitluck S."/>
            <person name="Chertkov O."/>
            <person name="Brettin T."/>
            <person name="Detter J.C."/>
            <person name="Han C."/>
            <person name="Kuske C.R."/>
            <person name="Schmutz J."/>
            <person name="Larimer F."/>
            <person name="Land M."/>
            <person name="Hauser L."/>
            <person name="Kyrpides N."/>
            <person name="Lykidis A."/>
            <person name="Emerson D."/>
            <person name="Richardson P."/>
        </authorList>
    </citation>
    <scope>NUCLEOTIDE SEQUENCE [LARGE SCALE GENOMIC DNA]</scope>
    <source>
        <strain>ATCC 51168 / LMG 8142 / SP-6</strain>
    </source>
</reference>
<dbReference type="EMBL" id="CP001013">
    <property type="protein sequence ID" value="ACB36249.1"/>
    <property type="molecule type" value="Genomic_DNA"/>
</dbReference>
<dbReference type="RefSeq" id="WP_012348994.1">
    <property type="nucleotide sequence ID" value="NC_010524.1"/>
</dbReference>
<dbReference type="SMR" id="B1Y8I3"/>
<dbReference type="STRING" id="395495.Lcho_3995"/>
<dbReference type="KEGG" id="lch:Lcho_3995"/>
<dbReference type="eggNOG" id="COG0185">
    <property type="taxonomic scope" value="Bacteria"/>
</dbReference>
<dbReference type="HOGENOM" id="CLU_144911_0_1_4"/>
<dbReference type="OrthoDB" id="9797833at2"/>
<dbReference type="Proteomes" id="UP000001693">
    <property type="component" value="Chromosome"/>
</dbReference>
<dbReference type="GO" id="GO:0005737">
    <property type="term" value="C:cytoplasm"/>
    <property type="evidence" value="ECO:0007669"/>
    <property type="project" value="UniProtKB-ARBA"/>
</dbReference>
<dbReference type="GO" id="GO:0015935">
    <property type="term" value="C:small ribosomal subunit"/>
    <property type="evidence" value="ECO:0007669"/>
    <property type="project" value="InterPro"/>
</dbReference>
<dbReference type="GO" id="GO:0019843">
    <property type="term" value="F:rRNA binding"/>
    <property type="evidence" value="ECO:0007669"/>
    <property type="project" value="UniProtKB-UniRule"/>
</dbReference>
<dbReference type="GO" id="GO:0003735">
    <property type="term" value="F:structural constituent of ribosome"/>
    <property type="evidence" value="ECO:0007669"/>
    <property type="project" value="InterPro"/>
</dbReference>
<dbReference type="GO" id="GO:0000028">
    <property type="term" value="P:ribosomal small subunit assembly"/>
    <property type="evidence" value="ECO:0007669"/>
    <property type="project" value="TreeGrafter"/>
</dbReference>
<dbReference type="GO" id="GO:0006412">
    <property type="term" value="P:translation"/>
    <property type="evidence" value="ECO:0007669"/>
    <property type="project" value="UniProtKB-UniRule"/>
</dbReference>
<dbReference type="FunFam" id="3.30.860.10:FF:000001">
    <property type="entry name" value="30S ribosomal protein S19"/>
    <property type="match status" value="1"/>
</dbReference>
<dbReference type="Gene3D" id="3.30.860.10">
    <property type="entry name" value="30s Ribosomal Protein S19, Chain A"/>
    <property type="match status" value="1"/>
</dbReference>
<dbReference type="HAMAP" id="MF_00531">
    <property type="entry name" value="Ribosomal_uS19"/>
    <property type="match status" value="1"/>
</dbReference>
<dbReference type="InterPro" id="IPR002222">
    <property type="entry name" value="Ribosomal_uS19"/>
</dbReference>
<dbReference type="InterPro" id="IPR005732">
    <property type="entry name" value="Ribosomal_uS19_bac-type"/>
</dbReference>
<dbReference type="InterPro" id="IPR020934">
    <property type="entry name" value="Ribosomal_uS19_CS"/>
</dbReference>
<dbReference type="InterPro" id="IPR023575">
    <property type="entry name" value="Ribosomal_uS19_SF"/>
</dbReference>
<dbReference type="NCBIfam" id="TIGR01050">
    <property type="entry name" value="rpsS_bact"/>
    <property type="match status" value="1"/>
</dbReference>
<dbReference type="PANTHER" id="PTHR11880">
    <property type="entry name" value="RIBOSOMAL PROTEIN S19P FAMILY MEMBER"/>
    <property type="match status" value="1"/>
</dbReference>
<dbReference type="PANTHER" id="PTHR11880:SF8">
    <property type="entry name" value="SMALL RIBOSOMAL SUBUNIT PROTEIN US19M"/>
    <property type="match status" value="1"/>
</dbReference>
<dbReference type="Pfam" id="PF00203">
    <property type="entry name" value="Ribosomal_S19"/>
    <property type="match status" value="1"/>
</dbReference>
<dbReference type="PIRSF" id="PIRSF002144">
    <property type="entry name" value="Ribosomal_S19"/>
    <property type="match status" value="1"/>
</dbReference>
<dbReference type="PRINTS" id="PR00975">
    <property type="entry name" value="RIBOSOMALS19"/>
</dbReference>
<dbReference type="SUPFAM" id="SSF54570">
    <property type="entry name" value="Ribosomal protein S19"/>
    <property type="match status" value="1"/>
</dbReference>
<dbReference type="PROSITE" id="PS00323">
    <property type="entry name" value="RIBOSOMAL_S19"/>
    <property type="match status" value="1"/>
</dbReference>
<name>RS19_LEPCP</name>
<proteinExistence type="inferred from homology"/>